<geneLocation type="chloroplast"/>
<dbReference type="EMBL" id="AF528880">
    <property type="protein sequence ID" value="AAQ09313.1"/>
    <property type="molecule type" value="Genomic_DNA"/>
</dbReference>
<dbReference type="RefSeq" id="YP_010533512.1">
    <property type="nucleotide sequence ID" value="NC_067846.1"/>
</dbReference>
<dbReference type="SMR" id="Q6EYR0"/>
<dbReference type="GeneID" id="76340667"/>
<dbReference type="GO" id="GO:0009535">
    <property type="term" value="C:chloroplast thylakoid membrane"/>
    <property type="evidence" value="ECO:0007669"/>
    <property type="project" value="UniProtKB-SubCell"/>
</dbReference>
<dbReference type="GO" id="GO:0009539">
    <property type="term" value="C:photosystem II reaction center"/>
    <property type="evidence" value="ECO:0007669"/>
    <property type="project" value="InterPro"/>
</dbReference>
<dbReference type="GO" id="GO:0009055">
    <property type="term" value="F:electron transfer activity"/>
    <property type="evidence" value="ECO:0007669"/>
    <property type="project" value="UniProtKB-UniRule"/>
</dbReference>
<dbReference type="GO" id="GO:0020037">
    <property type="term" value="F:heme binding"/>
    <property type="evidence" value="ECO:0007669"/>
    <property type="project" value="InterPro"/>
</dbReference>
<dbReference type="GO" id="GO:0005506">
    <property type="term" value="F:iron ion binding"/>
    <property type="evidence" value="ECO:0007669"/>
    <property type="project" value="UniProtKB-UniRule"/>
</dbReference>
<dbReference type="GO" id="GO:0009767">
    <property type="term" value="P:photosynthetic electron transport chain"/>
    <property type="evidence" value="ECO:0007669"/>
    <property type="project" value="InterPro"/>
</dbReference>
<dbReference type="HAMAP" id="MF_00643">
    <property type="entry name" value="PSII_PsbF"/>
    <property type="match status" value="1"/>
</dbReference>
<dbReference type="InterPro" id="IPR006241">
    <property type="entry name" value="PSII_cyt_b559_bsu"/>
</dbReference>
<dbReference type="InterPro" id="IPR006216">
    <property type="entry name" value="PSII_cyt_b559_CS"/>
</dbReference>
<dbReference type="InterPro" id="IPR013081">
    <property type="entry name" value="PSII_cyt_b559_N"/>
</dbReference>
<dbReference type="NCBIfam" id="TIGR01333">
    <property type="entry name" value="cyt_b559_beta"/>
    <property type="match status" value="1"/>
</dbReference>
<dbReference type="Pfam" id="PF00283">
    <property type="entry name" value="Cytochrom_B559"/>
    <property type="match status" value="1"/>
</dbReference>
<dbReference type="PIRSF" id="PIRSF000037">
    <property type="entry name" value="PsbF"/>
    <property type="match status" value="1"/>
</dbReference>
<dbReference type="SUPFAM" id="SSF161045">
    <property type="entry name" value="Cytochrome b559 subunits"/>
    <property type="match status" value="1"/>
</dbReference>
<dbReference type="PROSITE" id="PS00537">
    <property type="entry name" value="CYTOCHROME_B559"/>
    <property type="match status" value="1"/>
</dbReference>
<accession>Q6EYR0</accession>
<comment type="function">
    <text evidence="1">This b-type cytochrome is tightly associated with the reaction center of photosystem II (PSII). PSII is a light-driven water:plastoquinone oxidoreductase that uses light energy to abstract electrons from H(2)O, generating O(2) and a proton gradient subsequently used for ATP formation. It consists of a core antenna complex that captures photons, and an electron transfer chain that converts photonic excitation into a charge separation.</text>
</comment>
<comment type="cofactor">
    <cofactor evidence="1">
        <name>heme b</name>
        <dbReference type="ChEBI" id="CHEBI:60344"/>
    </cofactor>
    <text evidence="1">With its partner (PsbE) binds heme. PSII binds additional chlorophylls, carotenoids and specific lipids.</text>
</comment>
<comment type="subunit">
    <text evidence="1">Heterodimer of an alpha subunit and a beta subunit. PSII is composed of 1 copy each of membrane proteins PsbA, PsbB, PsbC, PsbD, PsbE, PsbF, PsbH, PsbI, PsbJ, PsbK, PsbL, PsbM, PsbT, PsbX, PsbY, PsbZ, Psb30/Ycf12, at least 3 peripheral proteins of the oxygen-evolving complex and a large number of cofactors. It forms dimeric complexes.</text>
</comment>
<comment type="subcellular location">
    <subcellularLocation>
        <location evidence="1">Plastid</location>
        <location evidence="1">Chloroplast thylakoid membrane</location>
        <topology evidence="1">Single-pass membrane protein</topology>
    </subcellularLocation>
</comment>
<comment type="similarity">
    <text evidence="1">Belongs to the PsbE/PsbF family.</text>
</comment>
<feature type="chain" id="PRO_0000200438" description="Cytochrome b559 subunit beta">
    <location>
        <begin position="1"/>
        <end position="39"/>
    </location>
</feature>
<feature type="transmembrane region" description="Helical" evidence="1">
    <location>
        <begin position="14"/>
        <end position="30"/>
    </location>
</feature>
<feature type="binding site" description="axial binding residue" evidence="1">
    <location>
        <position position="18"/>
    </location>
    <ligand>
        <name>heme</name>
        <dbReference type="ChEBI" id="CHEBI:30413"/>
        <note>ligand shared with alpha subunit</note>
    </ligand>
    <ligandPart>
        <name>Fe</name>
        <dbReference type="ChEBI" id="CHEBI:18248"/>
    </ligandPart>
</feature>
<gene>
    <name evidence="1" type="primary">psbF</name>
</gene>
<evidence type="ECO:0000255" key="1">
    <source>
        <dbReference type="HAMAP-Rule" id="MF_00643"/>
    </source>
</evidence>
<organism>
    <name type="scientific">Phytolacca americana</name>
    <name type="common">American pokeweed</name>
    <name type="synonym">Phytolacca decandra</name>
    <dbReference type="NCBI Taxonomy" id="3527"/>
    <lineage>
        <taxon>Eukaryota</taxon>
        <taxon>Viridiplantae</taxon>
        <taxon>Streptophyta</taxon>
        <taxon>Embryophyta</taxon>
        <taxon>Tracheophyta</taxon>
        <taxon>Spermatophyta</taxon>
        <taxon>Magnoliopsida</taxon>
        <taxon>eudicotyledons</taxon>
        <taxon>Gunneridae</taxon>
        <taxon>Pentapetalae</taxon>
        <taxon>Caryophyllales</taxon>
        <taxon>Phytolaccaceae</taxon>
        <taxon>Phytolacca</taxon>
    </lineage>
</organism>
<name>PSBF_PHYAM</name>
<keyword id="KW-0150">Chloroplast</keyword>
<keyword id="KW-0249">Electron transport</keyword>
<keyword id="KW-0349">Heme</keyword>
<keyword id="KW-0408">Iron</keyword>
<keyword id="KW-0472">Membrane</keyword>
<keyword id="KW-0479">Metal-binding</keyword>
<keyword id="KW-0602">Photosynthesis</keyword>
<keyword id="KW-0604">Photosystem II</keyword>
<keyword id="KW-0934">Plastid</keyword>
<keyword id="KW-0793">Thylakoid</keyword>
<keyword id="KW-0812">Transmembrane</keyword>
<keyword id="KW-1133">Transmembrane helix</keyword>
<keyword id="KW-0813">Transport</keyword>
<reference key="1">
    <citation type="submission" date="2002-07" db="EMBL/GenBank/DDBJ databases">
        <title>Parsing out signal and noise for seed-plant phylogenetic inference.</title>
        <authorList>
            <person name="Graham S.W."/>
            <person name="Rai H.S."/>
            <person name="Ikegami K."/>
            <person name="Reeves P.A."/>
            <person name="Olmstead R.G."/>
        </authorList>
    </citation>
    <scope>NUCLEOTIDE SEQUENCE [GENOMIC DNA]</scope>
</reference>
<proteinExistence type="inferred from homology"/>
<sequence>MTIDRTYPIFTVRWLAVHGLAVPTVSFLGSISAMQFIQR</sequence>
<protein>
    <recommendedName>
        <fullName evidence="1">Cytochrome b559 subunit beta</fullName>
    </recommendedName>
    <alternativeName>
        <fullName evidence="1">PSII reaction center subunit VI</fullName>
    </alternativeName>
</protein>